<protein>
    <recommendedName>
        <fullName>Leukocyte cell-derived chemotaxin-2</fullName>
        <shortName>LECT-2</shortName>
        <shortName>hLECT2</shortName>
    </recommendedName>
</protein>
<accession>O14960</accession>
<accession>B2RA90</accession>
<accession>O14565</accession>
<accession>Q52M49</accession>
<feature type="signal peptide" evidence="1">
    <location>
        <begin position="1"/>
        <end position="18"/>
    </location>
</feature>
<feature type="chain" id="PRO_0000017364" description="Leukocyte cell-derived chemotaxin-2">
    <location>
        <begin position="19"/>
        <end position="151"/>
    </location>
</feature>
<feature type="binding site" evidence="6 12">
    <location>
        <position position="53"/>
    </location>
    <ligand>
        <name>Zn(2+)</name>
        <dbReference type="ChEBI" id="CHEBI:29105"/>
    </ligand>
</feature>
<feature type="binding site" evidence="6 12">
    <location>
        <position position="57"/>
    </location>
    <ligand>
        <name>Zn(2+)</name>
        <dbReference type="ChEBI" id="CHEBI:29105"/>
    </ligand>
</feature>
<feature type="binding site" evidence="6 12">
    <location>
        <position position="138"/>
    </location>
    <ligand>
        <name>Zn(2+)</name>
        <dbReference type="ChEBI" id="CHEBI:29105"/>
    </ligand>
</feature>
<feature type="disulfide bond" evidence="5 6 12">
    <location>
        <begin position="25"/>
        <end position="60"/>
    </location>
</feature>
<feature type="disulfide bond" evidence="5 6 12">
    <location>
        <begin position="36"/>
        <end position="41"/>
    </location>
</feature>
<feature type="disulfide bond" evidence="5 6 12">
    <location>
        <begin position="99"/>
        <end position="142"/>
    </location>
</feature>
<feature type="sequence variant" id="VAR_011386" description="In dbSNP:rs31517." evidence="2 3 4 8 9 10">
    <original>I</original>
    <variation>V</variation>
    <location>
        <position position="58"/>
    </location>
</feature>
<feature type="mutagenesis site" description="No metalloendopeptidase activity." evidence="6">
    <original>Y</original>
    <variation>H</variation>
    <location>
        <position position="104"/>
    </location>
</feature>
<feature type="strand" evidence="13">
    <location>
        <begin position="49"/>
        <end position="51"/>
    </location>
</feature>
<feature type="strand" evidence="13">
    <location>
        <begin position="55"/>
        <end position="59"/>
    </location>
</feature>
<feature type="strand" evidence="13">
    <location>
        <begin position="65"/>
        <end position="67"/>
    </location>
</feature>
<feature type="strand" evidence="13">
    <location>
        <begin position="69"/>
        <end position="77"/>
    </location>
</feature>
<feature type="strand" evidence="14">
    <location>
        <begin position="85"/>
        <end position="88"/>
    </location>
</feature>
<feature type="strand" evidence="13">
    <location>
        <begin position="90"/>
        <end position="95"/>
    </location>
</feature>
<feature type="strand" evidence="13">
    <location>
        <begin position="98"/>
        <end position="108"/>
    </location>
</feature>
<feature type="strand" evidence="13">
    <location>
        <begin position="110"/>
        <end position="114"/>
    </location>
</feature>
<feature type="strand" evidence="13">
    <location>
        <begin position="118"/>
        <end position="123"/>
    </location>
</feature>
<feature type="helix" evidence="13">
    <location>
        <begin position="126"/>
        <end position="129"/>
    </location>
</feature>
<feature type="strand" evidence="13">
    <location>
        <begin position="136"/>
        <end position="141"/>
    </location>
</feature>
<feature type="helix" evidence="13">
    <location>
        <begin position="148"/>
        <end position="150"/>
    </location>
</feature>
<sequence length="151" mass="16390">MFSTKALLLAGLISTALAGPWANICAGKSSNEIRTCDRHGCGQYSAQRSQRPHQGVDILCSAGSTVYAPFTGMIVGQEKPYQNKNAINNGVRISGRGFCVKMFYIKPIKYKGPIKKGEKLGTLLPLQKVYPGIQSHVHIENCDSSDPTAYL</sequence>
<keyword id="KW-0002">3D-structure</keyword>
<keyword id="KW-0145">Chemotaxis</keyword>
<keyword id="KW-0963">Cytoplasm</keyword>
<keyword id="KW-1015">Disulfide bond</keyword>
<keyword id="KW-0479">Metal-binding</keyword>
<keyword id="KW-1267">Proteomics identification</keyword>
<keyword id="KW-1185">Reference proteome</keyword>
<keyword id="KW-0964">Secreted</keyword>
<keyword id="KW-0732">Signal</keyword>
<keyword id="KW-0862">Zinc</keyword>
<comment type="function">
    <text evidence="6 8">Has a neutrophil chemotactic activity. Also a positive regulator of chondrocyte proliferation (PubMed:9524238). Does not show metalloendopeptidase activity (PubMed:27334921).</text>
</comment>
<comment type="subunit">
    <text evidence="6">Interacts with MET.</text>
</comment>
<comment type="interaction">
    <interactant intactId="EBI-8307271">
        <id>O14960</id>
    </interactant>
    <interactant intactId="EBI-8307271">
        <id>O14960</id>
        <label>LECT2</label>
    </interactant>
    <organismsDiffer>false</organismsDiffer>
    <experiments>3</experiments>
</comment>
<comment type="subcellular location">
    <subcellularLocation>
        <location evidence="7">Cytoplasm</location>
    </subcellularLocation>
    <subcellularLocation>
        <location evidence="7">Secreted</location>
    </subcellularLocation>
</comment>
<comment type="tissue specificity">
    <text evidence="8 10">Highly expressed in adult and fetal liver and weakly in testis. Not expressed in bone marrow.</text>
</comment>
<comment type="induction">
    <text evidence="8">By phytohemagglutinin (PHA).</text>
</comment>
<comment type="similarity">
    <text evidence="11">Belongs to the LECT2/MIM-1 family.</text>
</comment>
<gene>
    <name type="primary">LECT2</name>
</gene>
<dbReference type="EMBL" id="D63521">
    <property type="protein sequence ID" value="BAA23609.1"/>
    <property type="molecule type" value="mRNA"/>
</dbReference>
<dbReference type="EMBL" id="AB007546">
    <property type="protein sequence ID" value="BAA25669.1"/>
    <property type="molecule type" value="Genomic_DNA"/>
</dbReference>
<dbReference type="EMBL" id="AK314092">
    <property type="protein sequence ID" value="BAG36787.1"/>
    <property type="molecule type" value="mRNA"/>
</dbReference>
<dbReference type="EMBL" id="AC004763">
    <property type="protein sequence ID" value="AAC17734.1"/>
    <property type="molecule type" value="Genomic_DNA"/>
</dbReference>
<dbReference type="EMBL" id="AC002428">
    <property type="protein sequence ID" value="AAB66905.1"/>
    <property type="molecule type" value="Genomic_DNA"/>
</dbReference>
<dbReference type="EMBL" id="BC093670">
    <property type="protein sequence ID" value="AAH93670.1"/>
    <property type="molecule type" value="mRNA"/>
</dbReference>
<dbReference type="EMBL" id="BC101579">
    <property type="protein sequence ID" value="AAI01580.1"/>
    <property type="molecule type" value="mRNA"/>
</dbReference>
<dbReference type="CCDS" id="CCDS4190.1"/>
<dbReference type="RefSeq" id="NP_002293.2">
    <property type="nucleotide sequence ID" value="NM_002302.3"/>
</dbReference>
<dbReference type="PDB" id="5B0H">
    <property type="method" value="X-ray"/>
    <property type="resolution" value="1.94 A"/>
    <property type="chains" value="A/B=19-151"/>
</dbReference>
<dbReference type="PDB" id="7N2I">
    <property type="method" value="EM"/>
    <property type="resolution" value="1.40 A"/>
    <property type="chains" value="A=63-71"/>
</dbReference>
<dbReference type="PDB" id="8G2V">
    <property type="method" value="EM"/>
    <property type="resolution" value="2.71 A"/>
    <property type="chains" value="A/B/C/D/E/F/G/H/I/J=73-93"/>
</dbReference>
<dbReference type="PDBsum" id="5B0H"/>
<dbReference type="PDBsum" id="7N2I"/>
<dbReference type="PDBsum" id="8G2V"/>
<dbReference type="BMRB" id="O14960"/>
<dbReference type="EMDB" id="EMD-29682"/>
<dbReference type="SMR" id="O14960"/>
<dbReference type="BioGRID" id="110142">
    <property type="interactions" value="24"/>
</dbReference>
<dbReference type="FunCoup" id="O14960">
    <property type="interactions" value="145"/>
</dbReference>
<dbReference type="IntAct" id="O14960">
    <property type="interactions" value="23"/>
</dbReference>
<dbReference type="MINT" id="O14960"/>
<dbReference type="STRING" id="9606.ENSP00000274507"/>
<dbReference type="GlyGen" id="O14960">
    <property type="glycosylation" value="1 site"/>
</dbReference>
<dbReference type="PhosphoSitePlus" id="O14960"/>
<dbReference type="BioMuta" id="LECT2"/>
<dbReference type="MassIVE" id="O14960"/>
<dbReference type="PaxDb" id="9606-ENSP00000274507"/>
<dbReference type="PeptideAtlas" id="O14960"/>
<dbReference type="ProteomicsDB" id="48336"/>
<dbReference type="Antibodypedia" id="26441">
    <property type="antibodies" value="287 antibodies from 22 providers"/>
</dbReference>
<dbReference type="DNASU" id="3950"/>
<dbReference type="Ensembl" id="ENST00000274507.6">
    <property type="protein sequence ID" value="ENSP00000274507.1"/>
    <property type="gene ID" value="ENSG00000145826.9"/>
</dbReference>
<dbReference type="GeneID" id="3950"/>
<dbReference type="KEGG" id="hsa:3950"/>
<dbReference type="MANE-Select" id="ENST00000274507.6">
    <property type="protein sequence ID" value="ENSP00000274507.1"/>
    <property type="RefSeq nucleotide sequence ID" value="NM_002302.3"/>
    <property type="RefSeq protein sequence ID" value="NP_002293.2"/>
</dbReference>
<dbReference type="UCSC" id="uc003lbe.1">
    <property type="organism name" value="human"/>
</dbReference>
<dbReference type="AGR" id="HGNC:6550"/>
<dbReference type="CTD" id="3950"/>
<dbReference type="DisGeNET" id="3950"/>
<dbReference type="GeneCards" id="LECT2"/>
<dbReference type="HGNC" id="HGNC:6550">
    <property type="gene designation" value="LECT2"/>
</dbReference>
<dbReference type="HPA" id="ENSG00000145826">
    <property type="expression patterns" value="Tissue enriched (liver)"/>
</dbReference>
<dbReference type="MIM" id="602882">
    <property type="type" value="gene"/>
</dbReference>
<dbReference type="neXtProt" id="NX_O14960"/>
<dbReference type="OpenTargets" id="ENSG00000145826"/>
<dbReference type="PharmGKB" id="PA30330"/>
<dbReference type="VEuPathDB" id="HostDB:ENSG00000145826"/>
<dbReference type="eggNOG" id="ENOG502S16D">
    <property type="taxonomic scope" value="Eukaryota"/>
</dbReference>
<dbReference type="GeneTree" id="ENSGT00390000015484"/>
<dbReference type="InParanoid" id="O14960"/>
<dbReference type="OMA" id="MCDSHGC"/>
<dbReference type="OrthoDB" id="5911921at2759"/>
<dbReference type="PAN-GO" id="O14960">
    <property type="GO annotations" value="0 GO annotations based on evolutionary models"/>
</dbReference>
<dbReference type="PhylomeDB" id="O14960"/>
<dbReference type="TreeFam" id="TF331097"/>
<dbReference type="PathwayCommons" id="O14960"/>
<dbReference type="SignaLink" id="O14960"/>
<dbReference type="BioGRID-ORCS" id="3950">
    <property type="hits" value="9 hits in 1144 CRISPR screens"/>
</dbReference>
<dbReference type="GeneWiki" id="LECT2"/>
<dbReference type="GenomeRNAi" id="3950"/>
<dbReference type="Pharos" id="O14960">
    <property type="development level" value="Tbio"/>
</dbReference>
<dbReference type="PRO" id="PR:O14960"/>
<dbReference type="Proteomes" id="UP000005640">
    <property type="component" value="Chromosome 5"/>
</dbReference>
<dbReference type="RNAct" id="O14960">
    <property type="molecule type" value="protein"/>
</dbReference>
<dbReference type="Bgee" id="ENSG00000145826">
    <property type="expression patterns" value="Expressed in buccal mucosa cell and 112 other cell types or tissues"/>
</dbReference>
<dbReference type="ExpressionAtlas" id="O14960">
    <property type="expression patterns" value="baseline and differential"/>
</dbReference>
<dbReference type="GO" id="GO:0005737">
    <property type="term" value="C:cytoplasm"/>
    <property type="evidence" value="ECO:0000304"/>
    <property type="project" value="ProtInc"/>
</dbReference>
<dbReference type="GO" id="GO:0005615">
    <property type="term" value="C:extracellular space"/>
    <property type="evidence" value="ECO:0000304"/>
    <property type="project" value="ProtInc"/>
</dbReference>
<dbReference type="GO" id="GO:0042802">
    <property type="term" value="F:identical protein binding"/>
    <property type="evidence" value="ECO:0000353"/>
    <property type="project" value="IntAct"/>
</dbReference>
<dbReference type="GO" id="GO:0046872">
    <property type="term" value="F:metal ion binding"/>
    <property type="evidence" value="ECO:0007669"/>
    <property type="project" value="UniProtKB-KW"/>
</dbReference>
<dbReference type="GO" id="GO:0006935">
    <property type="term" value="P:chemotaxis"/>
    <property type="evidence" value="ECO:0000304"/>
    <property type="project" value="ProtInc"/>
</dbReference>
<dbReference type="GO" id="GO:0001501">
    <property type="term" value="P:skeletal system development"/>
    <property type="evidence" value="ECO:0000304"/>
    <property type="project" value="ProtInc"/>
</dbReference>
<dbReference type="FunFam" id="2.70.70.10:FF:000011">
    <property type="entry name" value="Leukocyte cell-derived chemotaxin-2"/>
    <property type="match status" value="1"/>
</dbReference>
<dbReference type="Gene3D" id="2.70.70.10">
    <property type="entry name" value="Glucose Permease (Domain IIA)"/>
    <property type="match status" value="1"/>
</dbReference>
<dbReference type="InterPro" id="IPR011055">
    <property type="entry name" value="Dup_hybrid_motif"/>
</dbReference>
<dbReference type="InterPro" id="IPR008663">
    <property type="entry name" value="LECT2"/>
</dbReference>
<dbReference type="InterPro" id="IPR017381">
    <property type="entry name" value="LECT2_chordata"/>
</dbReference>
<dbReference type="InterPro" id="IPR016047">
    <property type="entry name" value="Peptidase_M23"/>
</dbReference>
<dbReference type="PANTHER" id="PTHR11329">
    <property type="entry name" value="LEUKOCYTE CELL-DERIVED CHEMOTAXIN 2"/>
    <property type="match status" value="1"/>
</dbReference>
<dbReference type="PANTHER" id="PTHR11329:SF0">
    <property type="entry name" value="LEUKOCYTE CELL-DERIVED CHEMOTAXIN-2"/>
    <property type="match status" value="1"/>
</dbReference>
<dbReference type="Pfam" id="PF01551">
    <property type="entry name" value="Peptidase_M23"/>
    <property type="match status" value="1"/>
</dbReference>
<dbReference type="PIRSF" id="PIRSF038085">
    <property type="entry name" value="LECT3"/>
    <property type="match status" value="1"/>
</dbReference>
<evidence type="ECO:0000250" key="1">
    <source>
        <dbReference type="UniProtKB" id="O62644"/>
    </source>
</evidence>
<evidence type="ECO:0000269" key="2">
    <source>
    </source>
</evidence>
<evidence type="ECO:0000269" key="3">
    <source>
    </source>
</evidence>
<evidence type="ECO:0000269" key="4">
    <source>
    </source>
</evidence>
<evidence type="ECO:0000269" key="5">
    <source>
    </source>
</evidence>
<evidence type="ECO:0000269" key="6">
    <source>
    </source>
</evidence>
<evidence type="ECO:0000269" key="7">
    <source>
    </source>
</evidence>
<evidence type="ECO:0000269" key="8">
    <source>
    </source>
</evidence>
<evidence type="ECO:0000269" key="9">
    <source>
    </source>
</evidence>
<evidence type="ECO:0000269" key="10">
    <source>
    </source>
</evidence>
<evidence type="ECO:0000305" key="11"/>
<evidence type="ECO:0007744" key="12">
    <source>
        <dbReference type="PDB" id="5B0H"/>
    </source>
</evidence>
<evidence type="ECO:0007829" key="13">
    <source>
        <dbReference type="PDB" id="5B0H"/>
    </source>
</evidence>
<evidence type="ECO:0007829" key="14">
    <source>
        <dbReference type="PDB" id="8G2V"/>
    </source>
</evidence>
<proteinExistence type="evidence at protein level"/>
<name>LECT2_HUMAN</name>
<reference key="1">
    <citation type="journal article" date="1998" name="Biochim. Biophys. Acta">
        <title>Molecular cloning of human and bovine LECT2 having a neutrophil chemotactic activity and its specific expression in the liver.</title>
        <authorList>
            <person name="Yamagoe S."/>
            <person name="Mizuno S."/>
            <person name="Suzuki K."/>
        </authorList>
    </citation>
    <scope>NUCLEOTIDE SEQUENCE [MRNA]</scope>
    <scope>VARIANT VAL-58</scope>
    <scope>FUNCTION</scope>
    <scope>INDUCTION BY PHYTOHEMAGGLUTININ</scope>
    <scope>TISSUE SPECIFICITY</scope>
    <source>
        <tissue>Liver</tissue>
    </source>
</reference>
<reference key="2">
    <citation type="journal article" date="1998" name="Genomics">
        <title>Molecular cloning, structural characterization, and chromosomal mapping of the human LECT2 gene.</title>
        <authorList>
            <person name="Yamagoe S."/>
            <person name="Kameoka Y."/>
            <person name="Hashimoto K."/>
            <person name="Mizuno S."/>
            <person name="Suzuki K."/>
        </authorList>
    </citation>
    <scope>NUCLEOTIDE SEQUENCE [GENOMIC DNA]</scope>
    <scope>VARIANT VAL-58</scope>
    <source>
        <tissue>Peripheral blood</tissue>
    </source>
</reference>
<reference key="3">
    <citation type="journal article" date="1998" name="Pathol. Int.">
        <title>Systemic expression of a newly recognized protein, LECT2, in the human body.</title>
        <authorList>
            <person name="Nagai H."/>
            <person name="Hamada T."/>
            <person name="Uchida T."/>
            <person name="Yamagoe S."/>
            <person name="Suzuki K."/>
        </authorList>
    </citation>
    <scope>NUCLEOTIDE SEQUENCE [MRNA]</scope>
    <scope>VARIANT VAL-58</scope>
    <scope>TISSUE SPECIFICITY</scope>
</reference>
<reference key="4">
    <citation type="journal article" date="2004" name="Nat. Genet.">
        <title>Complete sequencing and characterization of 21,243 full-length human cDNAs.</title>
        <authorList>
            <person name="Ota T."/>
            <person name="Suzuki Y."/>
            <person name="Nishikawa T."/>
            <person name="Otsuki T."/>
            <person name="Sugiyama T."/>
            <person name="Irie R."/>
            <person name="Wakamatsu A."/>
            <person name="Hayashi K."/>
            <person name="Sato H."/>
            <person name="Nagai K."/>
            <person name="Kimura K."/>
            <person name="Makita H."/>
            <person name="Sekine M."/>
            <person name="Obayashi M."/>
            <person name="Nishi T."/>
            <person name="Shibahara T."/>
            <person name="Tanaka T."/>
            <person name="Ishii S."/>
            <person name="Yamamoto J."/>
            <person name="Saito K."/>
            <person name="Kawai Y."/>
            <person name="Isono Y."/>
            <person name="Nakamura Y."/>
            <person name="Nagahari K."/>
            <person name="Murakami K."/>
            <person name="Yasuda T."/>
            <person name="Iwayanagi T."/>
            <person name="Wagatsuma M."/>
            <person name="Shiratori A."/>
            <person name="Sudo H."/>
            <person name="Hosoiri T."/>
            <person name="Kaku Y."/>
            <person name="Kodaira H."/>
            <person name="Kondo H."/>
            <person name="Sugawara M."/>
            <person name="Takahashi M."/>
            <person name="Kanda K."/>
            <person name="Yokoi T."/>
            <person name="Furuya T."/>
            <person name="Kikkawa E."/>
            <person name="Omura Y."/>
            <person name="Abe K."/>
            <person name="Kamihara K."/>
            <person name="Katsuta N."/>
            <person name="Sato K."/>
            <person name="Tanikawa M."/>
            <person name="Yamazaki M."/>
            <person name="Ninomiya K."/>
            <person name="Ishibashi T."/>
            <person name="Yamashita H."/>
            <person name="Murakawa K."/>
            <person name="Fujimori K."/>
            <person name="Tanai H."/>
            <person name="Kimata M."/>
            <person name="Watanabe M."/>
            <person name="Hiraoka S."/>
            <person name="Chiba Y."/>
            <person name="Ishida S."/>
            <person name="Ono Y."/>
            <person name="Takiguchi S."/>
            <person name="Watanabe S."/>
            <person name="Yosida M."/>
            <person name="Hotuta T."/>
            <person name="Kusano J."/>
            <person name="Kanehori K."/>
            <person name="Takahashi-Fujii A."/>
            <person name="Hara H."/>
            <person name="Tanase T.-O."/>
            <person name="Nomura Y."/>
            <person name="Togiya S."/>
            <person name="Komai F."/>
            <person name="Hara R."/>
            <person name="Takeuchi K."/>
            <person name="Arita M."/>
            <person name="Imose N."/>
            <person name="Musashino K."/>
            <person name="Yuuki H."/>
            <person name="Oshima A."/>
            <person name="Sasaki N."/>
            <person name="Aotsuka S."/>
            <person name="Yoshikawa Y."/>
            <person name="Matsunawa H."/>
            <person name="Ichihara T."/>
            <person name="Shiohata N."/>
            <person name="Sano S."/>
            <person name="Moriya S."/>
            <person name="Momiyama H."/>
            <person name="Satoh N."/>
            <person name="Takami S."/>
            <person name="Terashima Y."/>
            <person name="Suzuki O."/>
            <person name="Nakagawa S."/>
            <person name="Senoh A."/>
            <person name="Mizoguchi H."/>
            <person name="Goto Y."/>
            <person name="Shimizu F."/>
            <person name="Wakebe H."/>
            <person name="Hishigaki H."/>
            <person name="Watanabe T."/>
            <person name="Sugiyama A."/>
            <person name="Takemoto M."/>
            <person name="Kawakami B."/>
            <person name="Yamazaki M."/>
            <person name="Watanabe K."/>
            <person name="Kumagai A."/>
            <person name="Itakura S."/>
            <person name="Fukuzumi Y."/>
            <person name="Fujimori Y."/>
            <person name="Komiyama M."/>
            <person name="Tashiro H."/>
            <person name="Tanigami A."/>
            <person name="Fujiwara T."/>
            <person name="Ono T."/>
            <person name="Yamada K."/>
            <person name="Fujii Y."/>
            <person name="Ozaki K."/>
            <person name="Hirao M."/>
            <person name="Ohmori Y."/>
            <person name="Kawabata A."/>
            <person name="Hikiji T."/>
            <person name="Kobatake N."/>
            <person name="Inagaki H."/>
            <person name="Ikema Y."/>
            <person name="Okamoto S."/>
            <person name="Okitani R."/>
            <person name="Kawakami T."/>
            <person name="Noguchi S."/>
            <person name="Itoh T."/>
            <person name="Shigeta K."/>
            <person name="Senba T."/>
            <person name="Matsumura K."/>
            <person name="Nakajima Y."/>
            <person name="Mizuno T."/>
            <person name="Morinaga M."/>
            <person name="Sasaki M."/>
            <person name="Togashi T."/>
            <person name="Oyama M."/>
            <person name="Hata H."/>
            <person name="Watanabe M."/>
            <person name="Komatsu T."/>
            <person name="Mizushima-Sugano J."/>
            <person name="Satoh T."/>
            <person name="Shirai Y."/>
            <person name="Takahashi Y."/>
            <person name="Nakagawa K."/>
            <person name="Okumura K."/>
            <person name="Nagase T."/>
            <person name="Nomura N."/>
            <person name="Kikuchi H."/>
            <person name="Masuho Y."/>
            <person name="Yamashita R."/>
            <person name="Nakai K."/>
            <person name="Yada T."/>
            <person name="Nakamura Y."/>
            <person name="Ohara O."/>
            <person name="Isogai T."/>
            <person name="Sugano S."/>
        </authorList>
    </citation>
    <scope>NUCLEOTIDE SEQUENCE [LARGE SCALE MRNA]</scope>
    <scope>VARIANT VAL-58</scope>
    <source>
        <tissue>Liver</tissue>
    </source>
</reference>
<reference key="5">
    <citation type="journal article" date="2004" name="Nature">
        <title>The DNA sequence and comparative analysis of human chromosome 5.</title>
        <authorList>
            <person name="Schmutz J."/>
            <person name="Martin J."/>
            <person name="Terry A."/>
            <person name="Couronne O."/>
            <person name="Grimwood J."/>
            <person name="Lowry S."/>
            <person name="Gordon L.A."/>
            <person name="Scott D."/>
            <person name="Xie G."/>
            <person name="Huang W."/>
            <person name="Hellsten U."/>
            <person name="Tran-Gyamfi M."/>
            <person name="She X."/>
            <person name="Prabhakar S."/>
            <person name="Aerts A."/>
            <person name="Altherr M."/>
            <person name="Bajorek E."/>
            <person name="Black S."/>
            <person name="Branscomb E."/>
            <person name="Caoile C."/>
            <person name="Challacombe J.F."/>
            <person name="Chan Y.M."/>
            <person name="Denys M."/>
            <person name="Detter J.C."/>
            <person name="Escobar J."/>
            <person name="Flowers D."/>
            <person name="Fotopulos D."/>
            <person name="Glavina T."/>
            <person name="Gomez M."/>
            <person name="Gonzales E."/>
            <person name="Goodstein D."/>
            <person name="Grigoriev I."/>
            <person name="Groza M."/>
            <person name="Hammon N."/>
            <person name="Hawkins T."/>
            <person name="Haydu L."/>
            <person name="Israni S."/>
            <person name="Jett J."/>
            <person name="Kadner K."/>
            <person name="Kimball H."/>
            <person name="Kobayashi A."/>
            <person name="Lopez F."/>
            <person name="Lou Y."/>
            <person name="Martinez D."/>
            <person name="Medina C."/>
            <person name="Morgan J."/>
            <person name="Nandkeshwar R."/>
            <person name="Noonan J.P."/>
            <person name="Pitluck S."/>
            <person name="Pollard M."/>
            <person name="Predki P."/>
            <person name="Priest J."/>
            <person name="Ramirez L."/>
            <person name="Retterer J."/>
            <person name="Rodriguez A."/>
            <person name="Rogers S."/>
            <person name="Salamov A."/>
            <person name="Salazar A."/>
            <person name="Thayer N."/>
            <person name="Tice H."/>
            <person name="Tsai M."/>
            <person name="Ustaszewska A."/>
            <person name="Vo N."/>
            <person name="Wheeler J."/>
            <person name="Wu K."/>
            <person name="Yang J."/>
            <person name="Dickson M."/>
            <person name="Cheng J.-F."/>
            <person name="Eichler E.E."/>
            <person name="Olsen A."/>
            <person name="Pennacchio L.A."/>
            <person name="Rokhsar D.S."/>
            <person name="Richardson P."/>
            <person name="Lucas S.M."/>
            <person name="Myers R.M."/>
            <person name="Rubin E.M."/>
        </authorList>
    </citation>
    <scope>NUCLEOTIDE SEQUENCE [LARGE SCALE GENOMIC DNA]</scope>
    <scope>VARIANT VAL-58</scope>
</reference>
<reference key="6">
    <citation type="journal article" date="2004" name="Genome Res.">
        <title>The status, quality, and expansion of the NIH full-length cDNA project: the Mammalian Gene Collection (MGC).</title>
        <authorList>
            <consortium name="The MGC Project Team"/>
        </authorList>
    </citation>
    <scope>NUCLEOTIDE SEQUENCE [LARGE SCALE MRNA]</scope>
    <scope>VARIANT VAL-58</scope>
    <source>
        <tissue>Liver</tissue>
    </source>
</reference>
<reference key="7">
    <citation type="journal article" date="1996" name="Immunol. Lett.">
        <title>Purification and primary amino acid sequence of a novel neutrophil chemotactic factor LECT2.</title>
        <authorList>
            <person name="Yamagoe S."/>
            <person name="Yamakawa Y."/>
            <person name="Matsuo Y."/>
            <person name="Minowada J."/>
            <person name="Mizuno S."/>
            <person name="Suzuki K."/>
        </authorList>
    </citation>
    <scope>SUBCELLULAR LOCATION</scope>
</reference>
<reference key="8">
    <citation type="journal article" date="2009" name="Biosci. Trends">
        <title>Identification and assignment of three disulfide bonds in mammalian leukocyte cell-derived chemotaxin 2 by matrix-assisted laser desorption/ionization time-of-flight mass spectrometry.</title>
        <authorList>
            <person name="Okumura A."/>
            <person name="Suzuki T."/>
            <person name="Dohmae N."/>
            <person name="Okabe T."/>
            <person name="Hashimoto Y."/>
            <person name="Nakazato K."/>
            <person name="Ohno H."/>
            <person name="Miyazaki Y."/>
            <person name="Yamagoe S."/>
        </authorList>
    </citation>
    <scope>DISULFIDE BONDS</scope>
</reference>
<reference key="9">
    <citation type="journal article" date="2016" name="J. Biol. Chem.">
        <title>Crystal structure of human leukocyte cell-derived chemotaxin 2 (LECT2) reveals a mechanistic basis of functional evolution in a mammalian protein with an M23 metalloendopeptidase fold.</title>
        <authorList>
            <person name="Zheng H."/>
            <person name="Miyakawa T."/>
            <person name="Sawano Y."/>
            <person name="Asano A."/>
            <person name="Okumura A."/>
            <person name="Yamagoe S."/>
            <person name="Tanokura M."/>
        </authorList>
    </citation>
    <scope>X-RAY CRYSTALLOGRAPHY (1.94 ANGSTROMS) OF 19-151 IN COMPLEX WITH ZINC ION</scope>
    <scope>DISULFIDE BONDS</scope>
    <scope>MUTAGENESIS OF TYR-104</scope>
    <scope>INTERACTION WITH MET</scope>
</reference>
<organism>
    <name type="scientific">Homo sapiens</name>
    <name type="common">Human</name>
    <dbReference type="NCBI Taxonomy" id="9606"/>
    <lineage>
        <taxon>Eukaryota</taxon>
        <taxon>Metazoa</taxon>
        <taxon>Chordata</taxon>
        <taxon>Craniata</taxon>
        <taxon>Vertebrata</taxon>
        <taxon>Euteleostomi</taxon>
        <taxon>Mammalia</taxon>
        <taxon>Eutheria</taxon>
        <taxon>Euarchontoglires</taxon>
        <taxon>Primates</taxon>
        <taxon>Haplorrhini</taxon>
        <taxon>Catarrhini</taxon>
        <taxon>Hominidae</taxon>
        <taxon>Homo</taxon>
    </lineage>
</organism>